<reference key="1">
    <citation type="journal article" date="2004" name="Nature">
        <title>Genome evolution in yeasts.</title>
        <authorList>
            <person name="Dujon B."/>
            <person name="Sherman D."/>
            <person name="Fischer G."/>
            <person name="Durrens P."/>
            <person name="Casaregola S."/>
            <person name="Lafontaine I."/>
            <person name="de Montigny J."/>
            <person name="Marck C."/>
            <person name="Neuveglise C."/>
            <person name="Talla E."/>
            <person name="Goffard N."/>
            <person name="Frangeul L."/>
            <person name="Aigle M."/>
            <person name="Anthouard V."/>
            <person name="Babour A."/>
            <person name="Barbe V."/>
            <person name="Barnay S."/>
            <person name="Blanchin S."/>
            <person name="Beckerich J.-M."/>
            <person name="Beyne E."/>
            <person name="Bleykasten C."/>
            <person name="Boisrame A."/>
            <person name="Boyer J."/>
            <person name="Cattolico L."/>
            <person name="Confanioleri F."/>
            <person name="de Daruvar A."/>
            <person name="Despons L."/>
            <person name="Fabre E."/>
            <person name="Fairhead C."/>
            <person name="Ferry-Dumazet H."/>
            <person name="Groppi A."/>
            <person name="Hantraye F."/>
            <person name="Hennequin C."/>
            <person name="Jauniaux N."/>
            <person name="Joyet P."/>
            <person name="Kachouri R."/>
            <person name="Kerrest A."/>
            <person name="Koszul R."/>
            <person name="Lemaire M."/>
            <person name="Lesur I."/>
            <person name="Ma L."/>
            <person name="Muller H."/>
            <person name="Nicaud J.-M."/>
            <person name="Nikolski M."/>
            <person name="Oztas S."/>
            <person name="Ozier-Kalogeropoulos O."/>
            <person name="Pellenz S."/>
            <person name="Potier S."/>
            <person name="Richard G.-F."/>
            <person name="Straub M.-L."/>
            <person name="Suleau A."/>
            <person name="Swennen D."/>
            <person name="Tekaia F."/>
            <person name="Wesolowski-Louvel M."/>
            <person name="Westhof E."/>
            <person name="Wirth B."/>
            <person name="Zeniou-Meyer M."/>
            <person name="Zivanovic Y."/>
            <person name="Bolotin-Fukuhara M."/>
            <person name="Thierry A."/>
            <person name="Bouchier C."/>
            <person name="Caudron B."/>
            <person name="Scarpelli C."/>
            <person name="Gaillardin C."/>
            <person name="Weissenbach J."/>
            <person name="Wincker P."/>
            <person name="Souciet J.-L."/>
        </authorList>
    </citation>
    <scope>NUCLEOTIDE SEQUENCE [LARGE SCALE GENOMIC DNA]</scope>
    <source>
        <strain>ATCC 36239 / CBS 767 / BCRC 21394 / JCM 1990 / NBRC 0083 / IGC 2968</strain>
    </source>
</reference>
<keyword id="KW-0256">Endoplasmic reticulum</keyword>
<keyword id="KW-0472">Membrane</keyword>
<keyword id="KW-1185">Reference proteome</keyword>
<keyword id="KW-0732">Signal</keyword>
<keyword id="KW-0812">Transmembrane</keyword>
<keyword id="KW-1133">Transmembrane helix</keyword>
<organism>
    <name type="scientific">Debaryomyces hansenii (strain ATCC 36239 / CBS 767 / BCRC 21394 / JCM 1990 / NBRC 0083 / IGC 2968)</name>
    <name type="common">Yeast</name>
    <name type="synonym">Torulaspora hansenii</name>
    <dbReference type="NCBI Taxonomy" id="284592"/>
    <lineage>
        <taxon>Eukaryota</taxon>
        <taxon>Fungi</taxon>
        <taxon>Dikarya</taxon>
        <taxon>Ascomycota</taxon>
        <taxon>Saccharomycotina</taxon>
        <taxon>Pichiomycetes</taxon>
        <taxon>Debaryomycetaceae</taxon>
        <taxon>Debaryomyces</taxon>
    </lineage>
</organism>
<accession>Q6BW93</accession>
<protein>
    <recommendedName>
        <fullName>Increased recombination centers protein 22</fullName>
    </recommendedName>
</protein>
<gene>
    <name type="primary">IRC22</name>
    <name type="ordered locus">DEHA2B13354g</name>
</gene>
<feature type="signal peptide" evidence="2">
    <location>
        <begin position="1"/>
        <end position="20"/>
    </location>
</feature>
<feature type="chain" id="PRO_0000399078" description="Increased recombination centers protein 22">
    <location>
        <begin position="21"/>
        <end position="237"/>
    </location>
</feature>
<feature type="topological domain" description="Lumenal" evidence="2">
    <location>
        <begin position="21"/>
        <end position="161"/>
    </location>
</feature>
<feature type="transmembrane region" description="Helical" evidence="2">
    <location>
        <begin position="162"/>
        <end position="182"/>
    </location>
</feature>
<feature type="topological domain" description="Cytoplasmic" evidence="2">
    <location>
        <begin position="183"/>
        <end position="237"/>
    </location>
</feature>
<name>IRC22_DEBHA</name>
<sequence>MKLSFSIITALVAVASSAIAAPIDPEKATGSINFVVDYTISEFPEISNTDVAELTNGEAISLEYSVTNNEDKDISVVGVGGSFRDPANGNVKTNLTAAAVGPVLVAAGEKASFIQKIDLNLVADNYLLTPQIFVAVEEDLKFIQARGQLATVNDLPISLFNLQLLFLEAVLLATIGGILYFVYDIWGKRYIEGTAPIAKSSKKASSPSPVSVATGKAYNSEWIPEAHLKQKKSKKAY</sequence>
<comment type="function">
    <text>Is probably involved in a pathway contributing to genomic integrity.</text>
</comment>
<comment type="subcellular location">
    <subcellularLocation>
        <location evidence="1">Endoplasmic reticulum membrane</location>
        <topology evidence="1">Single-pass type I membrane protein</topology>
    </subcellularLocation>
</comment>
<comment type="similarity">
    <text evidence="3">Belongs to the IRC22 family.</text>
</comment>
<dbReference type="EMBL" id="CR382134">
    <property type="protein sequence ID" value="CAG85535.1"/>
    <property type="molecule type" value="Genomic_DNA"/>
</dbReference>
<dbReference type="RefSeq" id="XP_457526.1">
    <property type="nucleotide sequence ID" value="XM_457526.1"/>
</dbReference>
<dbReference type="FunCoup" id="Q6BW93">
    <property type="interactions" value="32"/>
</dbReference>
<dbReference type="STRING" id="284592.Q6BW93"/>
<dbReference type="GeneID" id="2913485"/>
<dbReference type="KEGG" id="dha:DEHA2B13354g"/>
<dbReference type="VEuPathDB" id="FungiDB:DEHA2B13354g"/>
<dbReference type="eggNOG" id="ENOG502S7BF">
    <property type="taxonomic scope" value="Eukaryota"/>
</dbReference>
<dbReference type="HOGENOM" id="CLU_078554_0_0_1"/>
<dbReference type="InParanoid" id="Q6BW93"/>
<dbReference type="OMA" id="WLPETYK"/>
<dbReference type="OrthoDB" id="1926781at2759"/>
<dbReference type="Proteomes" id="UP000000599">
    <property type="component" value="Chromosome B"/>
</dbReference>
<dbReference type="GO" id="GO:0005789">
    <property type="term" value="C:endoplasmic reticulum membrane"/>
    <property type="evidence" value="ECO:0007669"/>
    <property type="project" value="UniProtKB-SubCell"/>
</dbReference>
<dbReference type="InterPro" id="IPR005595">
    <property type="entry name" value="TRAP_alpha"/>
</dbReference>
<dbReference type="PANTHER" id="PTHR12924:SF0">
    <property type="entry name" value="TRANSLOCON-ASSOCIATED PROTEIN SUBUNIT ALPHA"/>
    <property type="match status" value="1"/>
</dbReference>
<dbReference type="PANTHER" id="PTHR12924">
    <property type="entry name" value="TRANSLOCON-ASSOCIATED PROTEIN, ALPHA SUBUNIT"/>
    <property type="match status" value="1"/>
</dbReference>
<dbReference type="Pfam" id="PF03896">
    <property type="entry name" value="TRAP_alpha"/>
    <property type="match status" value="1"/>
</dbReference>
<evidence type="ECO:0000250" key="1"/>
<evidence type="ECO:0000255" key="2"/>
<evidence type="ECO:0000305" key="3"/>
<proteinExistence type="inferred from homology"/>